<comment type="function">
    <text evidence="1">Maternal factor that plays a role in epigenetic chromatin reprogramming during early development of the zygote. Involved in the regulation of gametic DNA demethylation by inducing the conversion of the modified genomic base 5-methylcytosine (5mC) into 5-hydroxymethylcytosine (5hmC).</text>
</comment>
<comment type="subunit">
    <text evidence="1">Interacts with histone H3. Interacts with histone H4.</text>
</comment>
<comment type="interaction">
    <interactant intactId="EBI-12871202">
        <id>Q8N801-2</id>
    </interactant>
    <interactant intactId="EBI-10242151">
        <id>Q53EP0-3</id>
        <label>FNDC3B</label>
    </interactant>
    <organismsDiffer>false</organismsDiffer>
    <experiments>3</experiments>
</comment>
<comment type="subcellular location">
    <subcellularLocation>
        <location evidence="1">Cytoplasm</location>
    </subcellularLocation>
    <subcellularLocation>
        <location evidence="1">Nucleus</location>
    </subcellularLocation>
    <text evidence="1">Localizes in female and male zygote pronucleus. Associates preferentially with the paternal chromatin during zygote development.</text>
</comment>
<comment type="alternative products">
    <event type="alternative splicing"/>
    <isoform>
        <id>Q8N801-1</id>
        <name>1</name>
        <sequence type="displayed"/>
    </isoform>
    <isoform>
        <id>Q8N801-2</id>
        <name>2</name>
        <sequence type="described" ref="VSP_047926"/>
    </isoform>
</comment>
<name>STPG4_HUMAN</name>
<feature type="chain" id="PRO_0000311684" description="Protein STPG4">
    <location>
        <begin position="1"/>
        <end position="248"/>
    </location>
</feature>
<feature type="splice variant" id="VSP_047926" description="In isoform 2." evidence="2">
    <original>HEGPGPGHYNVKMPPTSSVTSCFQSRVPRFLPSCSKTPGPGAYTTLRQFPKQSPTIAKMGQEHSLFFNNNNWLLK</original>
    <variation>VSIM</variation>
    <location>
        <begin position="174"/>
        <end position="248"/>
    </location>
</feature>
<feature type="sequence variant" id="VAR_050715" description="In dbSNP:rs815804.">
    <original>L</original>
    <variation>M</variation>
    <location>
        <position position="17"/>
    </location>
</feature>
<feature type="sequence variant" id="VAR_050716" description="In dbSNP:rs17036300.">
    <original>Q</original>
    <variation>R</variation>
    <location>
        <position position="31"/>
    </location>
</feature>
<organism>
    <name type="scientific">Homo sapiens</name>
    <name type="common">Human</name>
    <dbReference type="NCBI Taxonomy" id="9606"/>
    <lineage>
        <taxon>Eukaryota</taxon>
        <taxon>Metazoa</taxon>
        <taxon>Chordata</taxon>
        <taxon>Craniata</taxon>
        <taxon>Vertebrata</taxon>
        <taxon>Euteleostomi</taxon>
        <taxon>Mammalia</taxon>
        <taxon>Eutheria</taxon>
        <taxon>Euarchontoglires</taxon>
        <taxon>Primates</taxon>
        <taxon>Haplorrhini</taxon>
        <taxon>Catarrhini</taxon>
        <taxon>Hominidae</taxon>
        <taxon>Homo</taxon>
    </lineage>
</organism>
<sequence length="248" mass="27807">MDQPAVATASTSIREDLVGGESFITASKPAQKTSSFEREGWWRIALTDTPIPGTYHLKTFIEESLLNPVIATYNFKNEGRKKPPLVQRNNPVLNDLPQYMPPDFLDLLKKQVATYSFKDKPRPSPSTLVDKDQSLQLSPGQYNVLPAPVPKYASRSCVFRSTVQRFPTTYFIPHEGPGPGHYNVKMPPTSSVTSCFQSRVPRFLPSCSKTPGPGAYTTLRQFPKQSPTIAKMGQEHSLFFNNNNWLLK</sequence>
<protein>
    <recommendedName>
        <fullName evidence="3">Protein STPG4</fullName>
    </recommendedName>
    <alternativeName>
        <fullName evidence="1">Gonad-specific expression gene protein</fullName>
        <shortName evidence="1">GSE</shortName>
    </alternativeName>
    <alternativeName>
        <fullName evidence="4">Sperm-tail PG-rich repeat-containing protein 4</fullName>
    </alternativeName>
</protein>
<dbReference type="EMBL" id="AK097491">
    <property type="protein sequence ID" value="BAC05075.1"/>
    <property type="molecule type" value="mRNA"/>
</dbReference>
<dbReference type="EMBL" id="AC073283">
    <property type="protein sequence ID" value="AAY24084.1"/>
    <property type="molecule type" value="Genomic_DNA"/>
</dbReference>
<dbReference type="EMBL" id="CH471053">
    <property type="protein sequence ID" value="EAX00224.1"/>
    <property type="molecule type" value="Genomic_DNA"/>
</dbReference>
<dbReference type="EMBL" id="CH471053">
    <property type="protein sequence ID" value="EAX00225.1"/>
    <property type="molecule type" value="Genomic_DNA"/>
</dbReference>
<dbReference type="EMBL" id="HY239491">
    <property type="status" value="NOT_ANNOTATED_CDS"/>
    <property type="molecule type" value="mRNA"/>
</dbReference>
<dbReference type="CCDS" id="CCDS1831.1">
    <molecule id="Q8N801-2"/>
</dbReference>
<dbReference type="CCDS" id="CCDS54356.1">
    <molecule id="Q8N801-1"/>
</dbReference>
<dbReference type="RefSeq" id="NP_001157033.1">
    <molecule id="Q8N801-1"/>
    <property type="nucleotide sequence ID" value="NM_001163561.2"/>
</dbReference>
<dbReference type="RefSeq" id="NP_775920.1">
    <molecule id="Q8N801-2"/>
    <property type="nucleotide sequence ID" value="NM_173649.3"/>
</dbReference>
<dbReference type="BioGRID" id="130008">
    <property type="interactions" value="4"/>
</dbReference>
<dbReference type="FunCoup" id="Q8N801">
    <property type="interactions" value="759"/>
</dbReference>
<dbReference type="IntAct" id="Q8N801">
    <property type="interactions" value="2"/>
</dbReference>
<dbReference type="MINT" id="Q8N801"/>
<dbReference type="STRING" id="9606.ENSP00000408527"/>
<dbReference type="iPTMnet" id="Q8N801"/>
<dbReference type="PhosphoSitePlus" id="Q8N801"/>
<dbReference type="BioMuta" id="STPG4"/>
<dbReference type="DMDM" id="544584734"/>
<dbReference type="MassIVE" id="Q8N801"/>
<dbReference type="PaxDb" id="9606-ENSP00000408527"/>
<dbReference type="PeptideAtlas" id="Q8N801"/>
<dbReference type="ProteomicsDB" id="45153"/>
<dbReference type="ProteomicsDB" id="72352">
    <molecule id="Q8N801-1"/>
</dbReference>
<dbReference type="TopDownProteomics" id="Q8N801-2">
    <molecule id="Q8N801-2"/>
</dbReference>
<dbReference type="Antibodypedia" id="62229">
    <property type="antibodies" value="36 antibodies from 6 providers"/>
</dbReference>
<dbReference type="DNASU" id="285051"/>
<dbReference type="Ensembl" id="ENST00000294947.2">
    <molecule id="Q8N801-2"/>
    <property type="protein sequence ID" value="ENSP00000294947.2"/>
    <property type="gene ID" value="ENSG00000239605.11"/>
</dbReference>
<dbReference type="Ensembl" id="ENST00000445927.7">
    <molecule id="Q8N801-1"/>
    <property type="protein sequence ID" value="ENSP00000408527.2"/>
    <property type="gene ID" value="ENSG00000239605.11"/>
</dbReference>
<dbReference type="GeneID" id="285051"/>
<dbReference type="KEGG" id="hsa:285051"/>
<dbReference type="MANE-Select" id="ENST00000445927.7">
    <property type="protein sequence ID" value="ENSP00000408527.2"/>
    <property type="RefSeq nucleotide sequence ID" value="NM_001163561.2"/>
    <property type="RefSeq protein sequence ID" value="NP_001157033.1"/>
</dbReference>
<dbReference type="UCSC" id="uc002rvs.3">
    <molecule id="Q8N801-1"/>
    <property type="organism name" value="human"/>
</dbReference>
<dbReference type="AGR" id="HGNC:26850"/>
<dbReference type="CTD" id="285051"/>
<dbReference type="DisGeNET" id="285051"/>
<dbReference type="GeneCards" id="STPG4"/>
<dbReference type="HGNC" id="HGNC:26850">
    <property type="gene designation" value="STPG4"/>
</dbReference>
<dbReference type="HPA" id="ENSG00000239605">
    <property type="expression patterns" value="Tissue enriched (testis)"/>
</dbReference>
<dbReference type="neXtProt" id="NX_Q8N801"/>
<dbReference type="OpenTargets" id="ENSG00000239605"/>
<dbReference type="PharmGKB" id="PA162379319"/>
<dbReference type="VEuPathDB" id="HostDB:ENSG00000239605"/>
<dbReference type="eggNOG" id="ENOG502S008">
    <property type="taxonomic scope" value="Eukaryota"/>
</dbReference>
<dbReference type="GeneTree" id="ENSGT00390000008095"/>
<dbReference type="HOGENOM" id="CLU_085743_0_0_1"/>
<dbReference type="InParanoid" id="Q8N801"/>
<dbReference type="OMA" id="PCHYNVT"/>
<dbReference type="OrthoDB" id="6228811at2759"/>
<dbReference type="PAN-GO" id="Q8N801">
    <property type="GO annotations" value="7 GO annotations based on evolutionary models"/>
</dbReference>
<dbReference type="PhylomeDB" id="Q8N801"/>
<dbReference type="TreeFam" id="TF329156"/>
<dbReference type="PathwayCommons" id="Q8N801"/>
<dbReference type="Reactome" id="R-HSA-9821002">
    <property type="pathway name" value="Chromatin modifications during the maternal to zygotic transition (MZT)"/>
</dbReference>
<dbReference type="SignaLink" id="Q8N801"/>
<dbReference type="BioGRID-ORCS" id="285051">
    <property type="hits" value="10 hits in 1109 CRISPR screens"/>
</dbReference>
<dbReference type="ChiTaRS" id="C2orf61">
    <property type="organism name" value="human"/>
</dbReference>
<dbReference type="GenomeRNAi" id="285051"/>
<dbReference type="Pharos" id="Q8N801">
    <property type="development level" value="Tdark"/>
</dbReference>
<dbReference type="PRO" id="PR:Q8N801"/>
<dbReference type="Proteomes" id="UP000005640">
    <property type="component" value="Chromosome 2"/>
</dbReference>
<dbReference type="RNAct" id="Q8N801">
    <property type="molecule type" value="protein"/>
</dbReference>
<dbReference type="Bgee" id="ENSG00000239605">
    <property type="expression patterns" value="Expressed in primordial germ cell in gonad and 94 other cell types or tissues"/>
</dbReference>
<dbReference type="ExpressionAtlas" id="Q8N801">
    <property type="expression patterns" value="baseline and differential"/>
</dbReference>
<dbReference type="GO" id="GO:0005737">
    <property type="term" value="C:cytoplasm"/>
    <property type="evidence" value="ECO:0000250"/>
    <property type="project" value="UniProtKB"/>
</dbReference>
<dbReference type="GO" id="GO:0001939">
    <property type="term" value="C:female pronucleus"/>
    <property type="evidence" value="ECO:0000250"/>
    <property type="project" value="UniProtKB"/>
</dbReference>
<dbReference type="GO" id="GO:0042585">
    <property type="term" value="C:germinal vesicle"/>
    <property type="evidence" value="ECO:0000250"/>
    <property type="project" value="UniProtKB"/>
</dbReference>
<dbReference type="GO" id="GO:0001673">
    <property type="term" value="C:male germ cell nucleus"/>
    <property type="evidence" value="ECO:0007669"/>
    <property type="project" value="Ensembl"/>
</dbReference>
<dbReference type="GO" id="GO:0001940">
    <property type="term" value="C:male pronucleus"/>
    <property type="evidence" value="ECO:0000250"/>
    <property type="project" value="UniProtKB"/>
</dbReference>
<dbReference type="GO" id="GO:0005634">
    <property type="term" value="C:nucleus"/>
    <property type="evidence" value="ECO:0000250"/>
    <property type="project" value="UniProtKB"/>
</dbReference>
<dbReference type="GO" id="GO:0003682">
    <property type="term" value="F:chromatin binding"/>
    <property type="evidence" value="ECO:0000250"/>
    <property type="project" value="UniProtKB"/>
</dbReference>
<dbReference type="GO" id="GO:0042393">
    <property type="term" value="F:histone binding"/>
    <property type="evidence" value="ECO:0000318"/>
    <property type="project" value="GO_Central"/>
</dbReference>
<dbReference type="GO" id="GO:0044727">
    <property type="term" value="P:epigenetic programing of male pronucleus"/>
    <property type="evidence" value="ECO:0000250"/>
    <property type="project" value="UniProtKB"/>
</dbReference>
<dbReference type="GO" id="GO:0072529">
    <property type="term" value="P:pyrimidine-containing compound catabolic process"/>
    <property type="evidence" value="ECO:0007669"/>
    <property type="project" value="Ensembl"/>
</dbReference>
<dbReference type="InterPro" id="IPR010736">
    <property type="entry name" value="SHIPPO-rpt"/>
</dbReference>
<dbReference type="PANTHER" id="PTHR35678">
    <property type="entry name" value="PROTEIN STPG4"/>
    <property type="match status" value="1"/>
</dbReference>
<dbReference type="PANTHER" id="PTHR35678:SF1">
    <property type="entry name" value="PROTEIN STPG4"/>
    <property type="match status" value="1"/>
</dbReference>
<dbReference type="Pfam" id="PF07004">
    <property type="entry name" value="SHIPPO-rpt"/>
    <property type="match status" value="2"/>
</dbReference>
<gene>
    <name evidence="4" type="primary">STPG4</name>
    <name evidence="4" type="synonym">C2orf61</name>
</gene>
<proteinExistence type="evidence at protein level"/>
<accession>Q8N801</accession>
<accession>H7C2Z2</accession>
<reference key="1">
    <citation type="journal article" date="2004" name="Nat. Genet.">
        <title>Complete sequencing and characterization of 21,243 full-length human cDNAs.</title>
        <authorList>
            <person name="Ota T."/>
            <person name="Suzuki Y."/>
            <person name="Nishikawa T."/>
            <person name="Otsuki T."/>
            <person name="Sugiyama T."/>
            <person name="Irie R."/>
            <person name="Wakamatsu A."/>
            <person name="Hayashi K."/>
            <person name="Sato H."/>
            <person name="Nagai K."/>
            <person name="Kimura K."/>
            <person name="Makita H."/>
            <person name="Sekine M."/>
            <person name="Obayashi M."/>
            <person name="Nishi T."/>
            <person name="Shibahara T."/>
            <person name="Tanaka T."/>
            <person name="Ishii S."/>
            <person name="Yamamoto J."/>
            <person name="Saito K."/>
            <person name="Kawai Y."/>
            <person name="Isono Y."/>
            <person name="Nakamura Y."/>
            <person name="Nagahari K."/>
            <person name="Murakami K."/>
            <person name="Yasuda T."/>
            <person name="Iwayanagi T."/>
            <person name="Wagatsuma M."/>
            <person name="Shiratori A."/>
            <person name="Sudo H."/>
            <person name="Hosoiri T."/>
            <person name="Kaku Y."/>
            <person name="Kodaira H."/>
            <person name="Kondo H."/>
            <person name="Sugawara M."/>
            <person name="Takahashi M."/>
            <person name="Kanda K."/>
            <person name="Yokoi T."/>
            <person name="Furuya T."/>
            <person name="Kikkawa E."/>
            <person name="Omura Y."/>
            <person name="Abe K."/>
            <person name="Kamihara K."/>
            <person name="Katsuta N."/>
            <person name="Sato K."/>
            <person name="Tanikawa M."/>
            <person name="Yamazaki M."/>
            <person name="Ninomiya K."/>
            <person name="Ishibashi T."/>
            <person name="Yamashita H."/>
            <person name="Murakawa K."/>
            <person name="Fujimori K."/>
            <person name="Tanai H."/>
            <person name="Kimata M."/>
            <person name="Watanabe M."/>
            <person name="Hiraoka S."/>
            <person name="Chiba Y."/>
            <person name="Ishida S."/>
            <person name="Ono Y."/>
            <person name="Takiguchi S."/>
            <person name="Watanabe S."/>
            <person name="Yosida M."/>
            <person name="Hotuta T."/>
            <person name="Kusano J."/>
            <person name="Kanehori K."/>
            <person name="Takahashi-Fujii A."/>
            <person name="Hara H."/>
            <person name="Tanase T.-O."/>
            <person name="Nomura Y."/>
            <person name="Togiya S."/>
            <person name="Komai F."/>
            <person name="Hara R."/>
            <person name="Takeuchi K."/>
            <person name="Arita M."/>
            <person name="Imose N."/>
            <person name="Musashino K."/>
            <person name="Yuuki H."/>
            <person name="Oshima A."/>
            <person name="Sasaki N."/>
            <person name="Aotsuka S."/>
            <person name="Yoshikawa Y."/>
            <person name="Matsunawa H."/>
            <person name="Ichihara T."/>
            <person name="Shiohata N."/>
            <person name="Sano S."/>
            <person name="Moriya S."/>
            <person name="Momiyama H."/>
            <person name="Satoh N."/>
            <person name="Takami S."/>
            <person name="Terashima Y."/>
            <person name="Suzuki O."/>
            <person name="Nakagawa S."/>
            <person name="Senoh A."/>
            <person name="Mizoguchi H."/>
            <person name="Goto Y."/>
            <person name="Shimizu F."/>
            <person name="Wakebe H."/>
            <person name="Hishigaki H."/>
            <person name="Watanabe T."/>
            <person name="Sugiyama A."/>
            <person name="Takemoto M."/>
            <person name="Kawakami B."/>
            <person name="Yamazaki M."/>
            <person name="Watanabe K."/>
            <person name="Kumagai A."/>
            <person name="Itakura S."/>
            <person name="Fukuzumi Y."/>
            <person name="Fujimori Y."/>
            <person name="Komiyama M."/>
            <person name="Tashiro H."/>
            <person name="Tanigami A."/>
            <person name="Fujiwara T."/>
            <person name="Ono T."/>
            <person name="Yamada K."/>
            <person name="Fujii Y."/>
            <person name="Ozaki K."/>
            <person name="Hirao M."/>
            <person name="Ohmori Y."/>
            <person name="Kawabata A."/>
            <person name="Hikiji T."/>
            <person name="Kobatake N."/>
            <person name="Inagaki H."/>
            <person name="Ikema Y."/>
            <person name="Okamoto S."/>
            <person name="Okitani R."/>
            <person name="Kawakami T."/>
            <person name="Noguchi S."/>
            <person name="Itoh T."/>
            <person name="Shigeta K."/>
            <person name="Senba T."/>
            <person name="Matsumura K."/>
            <person name="Nakajima Y."/>
            <person name="Mizuno T."/>
            <person name="Morinaga M."/>
            <person name="Sasaki M."/>
            <person name="Togashi T."/>
            <person name="Oyama M."/>
            <person name="Hata H."/>
            <person name="Watanabe M."/>
            <person name="Komatsu T."/>
            <person name="Mizushima-Sugano J."/>
            <person name="Satoh T."/>
            <person name="Shirai Y."/>
            <person name="Takahashi Y."/>
            <person name="Nakagawa K."/>
            <person name="Okumura K."/>
            <person name="Nagase T."/>
            <person name="Nomura N."/>
            <person name="Kikuchi H."/>
            <person name="Masuho Y."/>
            <person name="Yamashita R."/>
            <person name="Nakai K."/>
            <person name="Yada T."/>
            <person name="Nakamura Y."/>
            <person name="Ohara O."/>
            <person name="Isogai T."/>
            <person name="Sugano S."/>
        </authorList>
    </citation>
    <scope>NUCLEOTIDE SEQUENCE [LARGE SCALE MRNA] (ISOFORM 2)</scope>
    <source>
        <tissue>Testis</tissue>
    </source>
</reference>
<reference key="2">
    <citation type="journal article" date="2005" name="Nature">
        <title>Generation and annotation of the DNA sequences of human chromosomes 2 and 4.</title>
        <authorList>
            <person name="Hillier L.W."/>
            <person name="Graves T.A."/>
            <person name="Fulton R.S."/>
            <person name="Fulton L.A."/>
            <person name="Pepin K.H."/>
            <person name="Minx P."/>
            <person name="Wagner-McPherson C."/>
            <person name="Layman D."/>
            <person name="Wylie K."/>
            <person name="Sekhon M."/>
            <person name="Becker M.C."/>
            <person name="Fewell G.A."/>
            <person name="Delehaunty K.D."/>
            <person name="Miner T.L."/>
            <person name="Nash W.E."/>
            <person name="Kremitzki C."/>
            <person name="Oddy L."/>
            <person name="Du H."/>
            <person name="Sun H."/>
            <person name="Bradshaw-Cordum H."/>
            <person name="Ali J."/>
            <person name="Carter J."/>
            <person name="Cordes M."/>
            <person name="Harris A."/>
            <person name="Isak A."/>
            <person name="van Brunt A."/>
            <person name="Nguyen C."/>
            <person name="Du F."/>
            <person name="Courtney L."/>
            <person name="Kalicki J."/>
            <person name="Ozersky P."/>
            <person name="Abbott S."/>
            <person name="Armstrong J."/>
            <person name="Belter E.A."/>
            <person name="Caruso L."/>
            <person name="Cedroni M."/>
            <person name="Cotton M."/>
            <person name="Davidson T."/>
            <person name="Desai A."/>
            <person name="Elliott G."/>
            <person name="Erb T."/>
            <person name="Fronick C."/>
            <person name="Gaige T."/>
            <person name="Haakenson W."/>
            <person name="Haglund K."/>
            <person name="Holmes A."/>
            <person name="Harkins R."/>
            <person name="Kim K."/>
            <person name="Kruchowski S.S."/>
            <person name="Strong C.M."/>
            <person name="Grewal N."/>
            <person name="Goyea E."/>
            <person name="Hou S."/>
            <person name="Levy A."/>
            <person name="Martinka S."/>
            <person name="Mead K."/>
            <person name="McLellan M.D."/>
            <person name="Meyer R."/>
            <person name="Randall-Maher J."/>
            <person name="Tomlinson C."/>
            <person name="Dauphin-Kohlberg S."/>
            <person name="Kozlowicz-Reilly A."/>
            <person name="Shah N."/>
            <person name="Swearengen-Shahid S."/>
            <person name="Snider J."/>
            <person name="Strong J.T."/>
            <person name="Thompson J."/>
            <person name="Yoakum M."/>
            <person name="Leonard S."/>
            <person name="Pearman C."/>
            <person name="Trani L."/>
            <person name="Radionenko M."/>
            <person name="Waligorski J.E."/>
            <person name="Wang C."/>
            <person name="Rock S.M."/>
            <person name="Tin-Wollam A.-M."/>
            <person name="Maupin R."/>
            <person name="Latreille P."/>
            <person name="Wendl M.C."/>
            <person name="Yang S.-P."/>
            <person name="Pohl C."/>
            <person name="Wallis J.W."/>
            <person name="Spieth J."/>
            <person name="Bieri T.A."/>
            <person name="Berkowicz N."/>
            <person name="Nelson J.O."/>
            <person name="Osborne J."/>
            <person name="Ding L."/>
            <person name="Meyer R."/>
            <person name="Sabo A."/>
            <person name="Shotland Y."/>
            <person name="Sinha P."/>
            <person name="Wohldmann P.E."/>
            <person name="Cook L.L."/>
            <person name="Hickenbotham M.T."/>
            <person name="Eldred J."/>
            <person name="Williams D."/>
            <person name="Jones T.A."/>
            <person name="She X."/>
            <person name="Ciccarelli F.D."/>
            <person name="Izaurralde E."/>
            <person name="Taylor J."/>
            <person name="Schmutz J."/>
            <person name="Myers R.M."/>
            <person name="Cox D.R."/>
            <person name="Huang X."/>
            <person name="McPherson J.D."/>
            <person name="Mardis E.R."/>
            <person name="Clifton S.W."/>
            <person name="Warren W.C."/>
            <person name="Chinwalla A.T."/>
            <person name="Eddy S.R."/>
            <person name="Marra M.A."/>
            <person name="Ovcharenko I."/>
            <person name="Furey T.S."/>
            <person name="Miller W."/>
            <person name="Eichler E.E."/>
            <person name="Bork P."/>
            <person name="Suyama M."/>
            <person name="Torrents D."/>
            <person name="Waterston R.H."/>
            <person name="Wilson R.K."/>
        </authorList>
    </citation>
    <scope>NUCLEOTIDE SEQUENCE [LARGE SCALE GENOMIC DNA]</scope>
</reference>
<reference key="3">
    <citation type="submission" date="2005-09" db="EMBL/GenBank/DDBJ databases">
        <authorList>
            <person name="Mural R.J."/>
            <person name="Istrail S."/>
            <person name="Sutton G.G."/>
            <person name="Florea L."/>
            <person name="Halpern A.L."/>
            <person name="Mobarry C.M."/>
            <person name="Lippert R."/>
            <person name="Walenz B."/>
            <person name="Shatkay H."/>
            <person name="Dew I."/>
            <person name="Miller J.R."/>
            <person name="Flanigan M.J."/>
            <person name="Edwards N.J."/>
            <person name="Bolanos R."/>
            <person name="Fasulo D."/>
            <person name="Halldorsson B.V."/>
            <person name="Hannenhalli S."/>
            <person name="Turner R."/>
            <person name="Yooseph S."/>
            <person name="Lu F."/>
            <person name="Nusskern D.R."/>
            <person name="Shue B.C."/>
            <person name="Zheng X.H."/>
            <person name="Zhong F."/>
            <person name="Delcher A.L."/>
            <person name="Huson D.H."/>
            <person name="Kravitz S.A."/>
            <person name="Mouchard L."/>
            <person name="Reinert K."/>
            <person name="Remington K.A."/>
            <person name="Clark A.G."/>
            <person name="Waterman M.S."/>
            <person name="Eichler E.E."/>
            <person name="Adams M.D."/>
            <person name="Hunkapiller M.W."/>
            <person name="Myers E.W."/>
            <person name="Venter J.C."/>
        </authorList>
    </citation>
    <scope>NUCLEOTIDE SEQUENCE [LARGE SCALE GENOMIC DNA]</scope>
</reference>
<reference key="4">
    <citation type="submission" date="2012-05" db="EMBL/GenBank/DDBJ databases">
        <authorList>
            <person name="Arakawa T."/>
            <person name="Carninci P."/>
            <person name="Fukuda S."/>
            <person name="Hasegawa A."/>
            <person name="Hayashida K."/>
            <person name="Hori F."/>
            <person name="Kai C."/>
            <person name="Kawai J."/>
            <person name="Kojima M."/>
            <person name="Murata M."/>
            <person name="Nakamura M."/>
            <person name="Nishiyori H."/>
            <person name="Nomura K."/>
            <person name="Ohno M."/>
            <person name="Sasaki D."/>
            <person name="Shibazaki E."/>
            <person name="Tagami M."/>
            <person name="Tagami Y."/>
            <person name="Hayashizaki Y."/>
        </authorList>
    </citation>
    <scope>NUCLEOTIDE SEQUENCE [LARGE SCALE MRNA] OF 103-248 (ISOFORM 1)</scope>
    <source>
        <tissue>Testis</tissue>
    </source>
</reference>
<keyword id="KW-0025">Alternative splicing</keyword>
<keyword id="KW-0156">Chromatin regulator</keyword>
<keyword id="KW-0963">Cytoplasm</keyword>
<keyword id="KW-0217">Developmental protein</keyword>
<keyword id="KW-0539">Nucleus</keyword>
<keyword id="KW-1267">Proteomics identification</keyword>
<keyword id="KW-1185">Reference proteome</keyword>
<evidence type="ECO:0000250" key="1">
    <source>
        <dbReference type="UniProtKB" id="Q9DAG5"/>
    </source>
</evidence>
<evidence type="ECO:0000303" key="2">
    <source>
    </source>
</evidence>
<evidence type="ECO:0000305" key="3"/>
<evidence type="ECO:0000312" key="4">
    <source>
        <dbReference type="HGNC" id="HGNC:26850"/>
    </source>
</evidence>